<reference key="1">
    <citation type="journal article" date="2000" name="Science">
        <title>The genome sequence of Drosophila melanogaster.</title>
        <authorList>
            <person name="Adams M.D."/>
            <person name="Celniker S.E."/>
            <person name="Holt R.A."/>
            <person name="Evans C.A."/>
            <person name="Gocayne J.D."/>
            <person name="Amanatides P.G."/>
            <person name="Scherer S.E."/>
            <person name="Li P.W."/>
            <person name="Hoskins R.A."/>
            <person name="Galle R.F."/>
            <person name="George R.A."/>
            <person name="Lewis S.E."/>
            <person name="Richards S."/>
            <person name="Ashburner M."/>
            <person name="Henderson S.N."/>
            <person name="Sutton G.G."/>
            <person name="Wortman J.R."/>
            <person name="Yandell M.D."/>
            <person name="Zhang Q."/>
            <person name="Chen L.X."/>
            <person name="Brandon R.C."/>
            <person name="Rogers Y.-H.C."/>
            <person name="Blazej R.G."/>
            <person name="Champe M."/>
            <person name="Pfeiffer B.D."/>
            <person name="Wan K.H."/>
            <person name="Doyle C."/>
            <person name="Baxter E.G."/>
            <person name="Helt G."/>
            <person name="Nelson C.R."/>
            <person name="Miklos G.L.G."/>
            <person name="Abril J.F."/>
            <person name="Agbayani A."/>
            <person name="An H.-J."/>
            <person name="Andrews-Pfannkoch C."/>
            <person name="Baldwin D."/>
            <person name="Ballew R.M."/>
            <person name="Basu A."/>
            <person name="Baxendale J."/>
            <person name="Bayraktaroglu L."/>
            <person name="Beasley E.M."/>
            <person name="Beeson K.Y."/>
            <person name="Benos P.V."/>
            <person name="Berman B.P."/>
            <person name="Bhandari D."/>
            <person name="Bolshakov S."/>
            <person name="Borkova D."/>
            <person name="Botchan M.R."/>
            <person name="Bouck J."/>
            <person name="Brokstein P."/>
            <person name="Brottier P."/>
            <person name="Burtis K.C."/>
            <person name="Busam D.A."/>
            <person name="Butler H."/>
            <person name="Cadieu E."/>
            <person name="Center A."/>
            <person name="Chandra I."/>
            <person name="Cherry J.M."/>
            <person name="Cawley S."/>
            <person name="Dahlke C."/>
            <person name="Davenport L.B."/>
            <person name="Davies P."/>
            <person name="de Pablos B."/>
            <person name="Delcher A."/>
            <person name="Deng Z."/>
            <person name="Mays A.D."/>
            <person name="Dew I."/>
            <person name="Dietz S.M."/>
            <person name="Dodson K."/>
            <person name="Doup L.E."/>
            <person name="Downes M."/>
            <person name="Dugan-Rocha S."/>
            <person name="Dunkov B.C."/>
            <person name="Dunn P."/>
            <person name="Durbin K.J."/>
            <person name="Evangelista C.C."/>
            <person name="Ferraz C."/>
            <person name="Ferriera S."/>
            <person name="Fleischmann W."/>
            <person name="Fosler C."/>
            <person name="Gabrielian A.E."/>
            <person name="Garg N.S."/>
            <person name="Gelbart W.M."/>
            <person name="Glasser K."/>
            <person name="Glodek A."/>
            <person name="Gong F."/>
            <person name="Gorrell J.H."/>
            <person name="Gu Z."/>
            <person name="Guan P."/>
            <person name="Harris M."/>
            <person name="Harris N.L."/>
            <person name="Harvey D.A."/>
            <person name="Heiman T.J."/>
            <person name="Hernandez J.R."/>
            <person name="Houck J."/>
            <person name="Hostin D."/>
            <person name="Houston K.A."/>
            <person name="Howland T.J."/>
            <person name="Wei M.-H."/>
            <person name="Ibegwam C."/>
            <person name="Jalali M."/>
            <person name="Kalush F."/>
            <person name="Karpen G.H."/>
            <person name="Ke Z."/>
            <person name="Kennison J.A."/>
            <person name="Ketchum K.A."/>
            <person name="Kimmel B.E."/>
            <person name="Kodira C.D."/>
            <person name="Kraft C.L."/>
            <person name="Kravitz S."/>
            <person name="Kulp D."/>
            <person name="Lai Z."/>
            <person name="Lasko P."/>
            <person name="Lei Y."/>
            <person name="Levitsky A.A."/>
            <person name="Li J.H."/>
            <person name="Li Z."/>
            <person name="Liang Y."/>
            <person name="Lin X."/>
            <person name="Liu X."/>
            <person name="Mattei B."/>
            <person name="McIntosh T.C."/>
            <person name="McLeod M.P."/>
            <person name="McPherson D."/>
            <person name="Merkulov G."/>
            <person name="Milshina N.V."/>
            <person name="Mobarry C."/>
            <person name="Morris J."/>
            <person name="Moshrefi A."/>
            <person name="Mount S.M."/>
            <person name="Moy M."/>
            <person name="Murphy B."/>
            <person name="Murphy L."/>
            <person name="Muzny D.M."/>
            <person name="Nelson D.L."/>
            <person name="Nelson D.R."/>
            <person name="Nelson K.A."/>
            <person name="Nixon K."/>
            <person name="Nusskern D.R."/>
            <person name="Pacleb J.M."/>
            <person name="Palazzolo M."/>
            <person name="Pittman G.S."/>
            <person name="Pan S."/>
            <person name="Pollard J."/>
            <person name="Puri V."/>
            <person name="Reese M.G."/>
            <person name="Reinert K."/>
            <person name="Remington K."/>
            <person name="Saunders R.D.C."/>
            <person name="Scheeler F."/>
            <person name="Shen H."/>
            <person name="Shue B.C."/>
            <person name="Siden-Kiamos I."/>
            <person name="Simpson M."/>
            <person name="Skupski M.P."/>
            <person name="Smith T.J."/>
            <person name="Spier E."/>
            <person name="Spradling A.C."/>
            <person name="Stapleton M."/>
            <person name="Strong R."/>
            <person name="Sun E."/>
            <person name="Svirskas R."/>
            <person name="Tector C."/>
            <person name="Turner R."/>
            <person name="Venter E."/>
            <person name="Wang A.H."/>
            <person name="Wang X."/>
            <person name="Wang Z.-Y."/>
            <person name="Wassarman D.A."/>
            <person name="Weinstock G.M."/>
            <person name="Weissenbach J."/>
            <person name="Williams S.M."/>
            <person name="Woodage T."/>
            <person name="Worley K.C."/>
            <person name="Wu D."/>
            <person name="Yang S."/>
            <person name="Yao Q.A."/>
            <person name="Ye J."/>
            <person name="Yeh R.-F."/>
            <person name="Zaveri J.S."/>
            <person name="Zhan M."/>
            <person name="Zhang G."/>
            <person name="Zhao Q."/>
            <person name="Zheng L."/>
            <person name="Zheng X.H."/>
            <person name="Zhong F.N."/>
            <person name="Zhong W."/>
            <person name="Zhou X."/>
            <person name="Zhu S.C."/>
            <person name="Zhu X."/>
            <person name="Smith H.O."/>
            <person name="Gibbs R.A."/>
            <person name="Myers E.W."/>
            <person name="Rubin G.M."/>
            <person name="Venter J.C."/>
        </authorList>
    </citation>
    <scope>NUCLEOTIDE SEQUENCE [LARGE SCALE GENOMIC DNA]</scope>
    <source>
        <strain>Berkeley</strain>
    </source>
</reference>
<reference key="2">
    <citation type="journal article" date="2002" name="Genome Biol.">
        <title>Annotation of the Drosophila melanogaster euchromatic genome: a systematic review.</title>
        <authorList>
            <person name="Misra S."/>
            <person name="Crosby M.A."/>
            <person name="Mungall C.J."/>
            <person name="Matthews B.B."/>
            <person name="Campbell K.S."/>
            <person name="Hradecky P."/>
            <person name="Huang Y."/>
            <person name="Kaminker J.S."/>
            <person name="Millburn G.H."/>
            <person name="Prochnik S.E."/>
            <person name="Smith C.D."/>
            <person name="Tupy J.L."/>
            <person name="Whitfield E.J."/>
            <person name="Bayraktaroglu L."/>
            <person name="Berman B.P."/>
            <person name="Bettencourt B.R."/>
            <person name="Celniker S.E."/>
            <person name="de Grey A.D.N.J."/>
            <person name="Drysdale R.A."/>
            <person name="Harris N.L."/>
            <person name="Richter J."/>
            <person name="Russo S."/>
            <person name="Schroeder A.J."/>
            <person name="Shu S.Q."/>
            <person name="Stapleton M."/>
            <person name="Yamada C."/>
            <person name="Ashburner M."/>
            <person name="Gelbart W.M."/>
            <person name="Rubin G.M."/>
            <person name="Lewis S.E."/>
        </authorList>
    </citation>
    <scope>GENOME REANNOTATION</scope>
    <source>
        <strain>Berkeley</strain>
    </source>
</reference>
<reference key="3">
    <citation type="journal article" date="2002" name="Genome Biol.">
        <title>A Drosophila full-length cDNA resource.</title>
        <authorList>
            <person name="Stapleton M."/>
            <person name="Carlson J.W."/>
            <person name="Brokstein P."/>
            <person name="Yu C."/>
            <person name="Champe M."/>
            <person name="George R.A."/>
            <person name="Guarin H."/>
            <person name="Kronmiller B."/>
            <person name="Pacleb J.M."/>
            <person name="Park S."/>
            <person name="Wan K.H."/>
            <person name="Rubin G.M."/>
            <person name="Celniker S.E."/>
        </authorList>
    </citation>
    <scope>NUCLEOTIDE SEQUENCE [LARGE SCALE MRNA] (ISOFORM 2)</scope>
    <source>
        <strain>Berkeley</strain>
        <tissue>Embryo</tissue>
    </source>
</reference>
<reference key="4">
    <citation type="journal article" date="2007" name="Glycobiology">
        <title>Identification of N-glycosylated proteins from the central nervous system of Drosophila melanogaster.</title>
        <authorList>
            <person name="Koles K."/>
            <person name="Lim J.-M."/>
            <person name="Aoki K."/>
            <person name="Porterfield M."/>
            <person name="Tiemeyer M."/>
            <person name="Wells L."/>
            <person name="Panin V."/>
        </authorList>
    </citation>
    <scope>GLYCOSYLATION [LARGE SCALE ANALYSIS] AT ASN-42</scope>
    <scope>IDENTIFICATION BY MASS SPECTROMETRY</scope>
    <source>
        <strain>Oregon-R</strain>
        <tissue>Head</tissue>
    </source>
</reference>
<dbReference type="EMBL" id="AE013599">
    <property type="protein sequence ID" value="AAM70807.1"/>
    <property type="molecule type" value="Genomic_DNA"/>
</dbReference>
<dbReference type="EMBL" id="AE013599">
    <property type="protein sequence ID" value="AAM70808.1"/>
    <property type="molecule type" value="Genomic_DNA"/>
</dbReference>
<dbReference type="EMBL" id="AY069668">
    <property type="protein sequence ID" value="AAL39813.1"/>
    <property type="molecule type" value="mRNA"/>
</dbReference>
<dbReference type="RefSeq" id="NP_610223.1">
    <molecule id="Q7K0P4-2"/>
    <property type="nucleotide sequence ID" value="NM_136379.4"/>
</dbReference>
<dbReference type="RefSeq" id="NP_724485.1">
    <molecule id="Q7K0P4-1"/>
    <property type="nucleotide sequence ID" value="NM_165482.4"/>
</dbReference>
<dbReference type="BioGRID" id="61468">
    <property type="interactions" value="5"/>
</dbReference>
<dbReference type="FunCoup" id="Q7K0P4">
    <property type="interactions" value="568"/>
</dbReference>
<dbReference type="IntAct" id="Q7K0P4">
    <property type="interactions" value="5"/>
</dbReference>
<dbReference type="STRING" id="7227.FBpp0085453"/>
<dbReference type="TCDB" id="9.B.132.1.1">
    <property type="family name" value="the post-gpi attachment protein-3 (p-gap3) family"/>
</dbReference>
<dbReference type="GlyCosmos" id="Q7K0P4">
    <property type="glycosylation" value="1 site, No reported glycans"/>
</dbReference>
<dbReference type="GlyGen" id="Q7K0P4">
    <property type="glycosylation" value="1 site"/>
</dbReference>
<dbReference type="iPTMnet" id="Q7K0P4"/>
<dbReference type="PaxDb" id="7227-FBpp0085453"/>
<dbReference type="DNASU" id="35570"/>
<dbReference type="EnsemblMetazoa" id="FBtr0086118">
    <molecule id="Q7K0P4-1"/>
    <property type="protein sequence ID" value="FBpp0085452"/>
    <property type="gene ID" value="FBgn0033088"/>
</dbReference>
<dbReference type="EnsemblMetazoa" id="FBtr0086119">
    <molecule id="Q7K0P4-2"/>
    <property type="protein sequence ID" value="FBpp0085453"/>
    <property type="gene ID" value="FBgn0033088"/>
</dbReference>
<dbReference type="GeneID" id="35570"/>
<dbReference type="KEGG" id="dme:Dmel_CG3271"/>
<dbReference type="UCSC" id="CG3271-RA">
    <molecule id="Q7K0P4-1"/>
    <property type="organism name" value="d. melanogaster"/>
</dbReference>
<dbReference type="AGR" id="FB:FBgn0033088"/>
<dbReference type="CTD" id="93210"/>
<dbReference type="FlyBase" id="FBgn0033088">
    <property type="gene designation" value="PGAP3"/>
</dbReference>
<dbReference type="VEuPathDB" id="VectorBase:FBgn0033088"/>
<dbReference type="eggNOG" id="KOG2970">
    <property type="taxonomic scope" value="Eukaryota"/>
</dbReference>
<dbReference type="GeneTree" id="ENSGT00390000001304"/>
<dbReference type="HOGENOM" id="CLU_032917_1_1_1"/>
<dbReference type="InParanoid" id="Q7K0P4"/>
<dbReference type="OMA" id="DFMIEDC"/>
<dbReference type="OrthoDB" id="419770at2759"/>
<dbReference type="PhylomeDB" id="Q7K0P4"/>
<dbReference type="BioGRID-ORCS" id="35570">
    <property type="hits" value="0 hits in 1 CRISPR screen"/>
</dbReference>
<dbReference type="GenomeRNAi" id="35570"/>
<dbReference type="PRO" id="PR:Q7K0P4"/>
<dbReference type="Proteomes" id="UP000000803">
    <property type="component" value="Chromosome 2R"/>
</dbReference>
<dbReference type="Bgee" id="FBgn0033088">
    <property type="expression patterns" value="Expressed in oviduct (Drosophila) and 85 other cell types or tissues"/>
</dbReference>
<dbReference type="GO" id="GO:0005789">
    <property type="term" value="C:endoplasmic reticulum membrane"/>
    <property type="evidence" value="ECO:0000250"/>
    <property type="project" value="UniProtKB"/>
</dbReference>
<dbReference type="GO" id="GO:0000139">
    <property type="term" value="C:Golgi membrane"/>
    <property type="evidence" value="ECO:0007669"/>
    <property type="project" value="UniProtKB-SubCell"/>
</dbReference>
<dbReference type="GO" id="GO:0016788">
    <property type="term" value="F:hydrolase activity, acting on ester bonds"/>
    <property type="evidence" value="ECO:0000250"/>
    <property type="project" value="UniProtKB"/>
</dbReference>
<dbReference type="GO" id="GO:0006506">
    <property type="term" value="P:GPI anchor biosynthetic process"/>
    <property type="evidence" value="ECO:0000318"/>
    <property type="project" value="GO_Central"/>
</dbReference>
<dbReference type="GO" id="GO:0006505">
    <property type="term" value="P:GPI anchor metabolic process"/>
    <property type="evidence" value="ECO:0000250"/>
    <property type="project" value="UniProtKB"/>
</dbReference>
<dbReference type="InterPro" id="IPR007217">
    <property type="entry name" value="Per1-like"/>
</dbReference>
<dbReference type="PANTHER" id="PTHR13148">
    <property type="entry name" value="PER1-RELATED"/>
    <property type="match status" value="1"/>
</dbReference>
<dbReference type="PANTHER" id="PTHR13148:SF0">
    <property type="entry name" value="POST-GPI ATTACHMENT TO PROTEINS FACTOR 3"/>
    <property type="match status" value="1"/>
</dbReference>
<dbReference type="Pfam" id="PF04080">
    <property type="entry name" value="Per1"/>
    <property type="match status" value="1"/>
</dbReference>
<feature type="signal peptide" evidence="2">
    <location>
        <begin position="1"/>
        <end position="22"/>
    </location>
</feature>
<feature type="chain" id="PRO_0000339361" description="Post-GPI attachment to proteins factor 3">
    <location>
        <begin position="23"/>
        <end position="326"/>
    </location>
</feature>
<feature type="topological domain" description="Lumenal" evidence="2">
    <location>
        <begin position="23"/>
        <end position="105"/>
    </location>
</feature>
<feature type="transmembrane region" description="Helical" evidence="2">
    <location>
        <begin position="106"/>
        <end position="126"/>
    </location>
</feature>
<feature type="topological domain" description="Cytoplasmic" evidence="2">
    <location>
        <begin position="127"/>
        <end position="142"/>
    </location>
</feature>
<feature type="transmembrane region" description="Helical" evidence="2">
    <location>
        <begin position="143"/>
        <end position="163"/>
    </location>
</feature>
<feature type="topological domain" description="Lumenal" evidence="2">
    <location>
        <begin position="164"/>
        <end position="171"/>
    </location>
</feature>
<feature type="transmembrane region" description="Helical" evidence="2">
    <location>
        <begin position="172"/>
        <end position="192"/>
    </location>
</feature>
<feature type="topological domain" description="Cytoplasmic" evidence="2">
    <location>
        <begin position="193"/>
        <end position="203"/>
    </location>
</feature>
<feature type="transmembrane region" description="Helical" evidence="2">
    <location>
        <begin position="204"/>
        <end position="224"/>
    </location>
</feature>
<feature type="topological domain" description="Lumenal" evidence="2">
    <location>
        <begin position="225"/>
        <end position="232"/>
    </location>
</feature>
<feature type="transmembrane region" description="Helical" evidence="2">
    <location>
        <begin position="233"/>
        <end position="253"/>
    </location>
</feature>
<feature type="topological domain" description="Cytoplasmic" evidence="2">
    <location>
        <begin position="254"/>
        <end position="267"/>
    </location>
</feature>
<feature type="transmembrane region" description="Helical" evidence="2">
    <location>
        <begin position="268"/>
        <end position="288"/>
    </location>
</feature>
<feature type="topological domain" description="Lumenal" evidence="2">
    <location>
        <begin position="289"/>
        <end position="302"/>
    </location>
</feature>
<feature type="transmembrane region" description="Helical" evidence="2">
    <location>
        <begin position="303"/>
        <end position="325"/>
    </location>
</feature>
<feature type="topological domain" description="Cytoplasmic" evidence="2">
    <location>
        <position position="326"/>
    </location>
</feature>
<feature type="glycosylation site" description="N-linked (GlcNAc...) asparagine" evidence="3">
    <location>
        <position position="42"/>
    </location>
</feature>
<feature type="splice variant" id="VSP_034160" description="In isoform 2." evidence="4">
    <original>ECVEILLYSNIATCVCILAS</original>
    <variation>DFMIEDCRTLRKEKAAAGGYSFYN</variation>
    <location>
        <begin position="307"/>
        <end position="326"/>
    </location>
</feature>
<proteinExistence type="evidence at protein level"/>
<sequence length="326" mass="38113">MSSRSLSAIVLLLGALVTACLASNGDRTQFFHNCRQNCERTNCSADGLEIQEQAVKFYQQSVFDRLFQWSCADECQYGCMWRTVFAFFERGWPIPQFYGKWPFLRLLGMQEPASVIFSCLNFVVHLRLLRKFRREVRPDSPCYMLTHIFAVTSLNGWIWSAIFHTRDFPLTELLDYAFAYSIILCSLYVMVMRMLHRYSLFLRGVITLAFLSYYINYFAYLSVGRFNYAFNMMVNVATGVIAAVGWFVWCHFVRTRRPYFRRILRFYILMALAMSLELLDFPPILWILDAHALWHLATIPLASLYYECVEILLYSNIATCVCILAS</sequence>
<keyword id="KW-0025">Alternative splicing</keyword>
<keyword id="KW-0325">Glycoprotein</keyword>
<keyword id="KW-0333">Golgi apparatus</keyword>
<keyword id="KW-0337">GPI-anchor biosynthesis</keyword>
<keyword id="KW-0472">Membrane</keyword>
<keyword id="KW-1185">Reference proteome</keyword>
<keyword id="KW-0732">Signal</keyword>
<keyword id="KW-0812">Transmembrane</keyword>
<keyword id="KW-1133">Transmembrane helix</keyword>
<name>PGAP3_DROME</name>
<accession>Q7K0P4</accession>
<accession>A1Z6N0</accession>
<gene>
    <name type="primary">PGAP3</name>
    <name type="ORF">CG3271</name>
</gene>
<protein>
    <recommendedName>
        <fullName>Post-GPI attachment to proteins factor 3</fullName>
    </recommendedName>
</protein>
<comment type="function">
    <text evidence="1">Involved in the lipid remodeling steps of GPI-anchor maturation.</text>
</comment>
<comment type="subcellular location">
    <subcellularLocation>
        <location evidence="1">Golgi apparatus membrane</location>
        <topology evidence="1">Multi-pass membrane protein</topology>
    </subcellularLocation>
</comment>
<comment type="alternative products">
    <event type="alternative splicing"/>
    <isoform>
        <id>Q7K0P4-1</id>
        <name>1</name>
        <sequence type="displayed"/>
    </isoform>
    <isoform>
        <id>Q7K0P4-2</id>
        <name>2</name>
        <sequence type="described" ref="VSP_034160"/>
    </isoform>
</comment>
<comment type="similarity">
    <text evidence="5">Belongs to the PGAP3 family.</text>
</comment>
<organism>
    <name type="scientific">Drosophila melanogaster</name>
    <name type="common">Fruit fly</name>
    <dbReference type="NCBI Taxonomy" id="7227"/>
    <lineage>
        <taxon>Eukaryota</taxon>
        <taxon>Metazoa</taxon>
        <taxon>Ecdysozoa</taxon>
        <taxon>Arthropoda</taxon>
        <taxon>Hexapoda</taxon>
        <taxon>Insecta</taxon>
        <taxon>Pterygota</taxon>
        <taxon>Neoptera</taxon>
        <taxon>Endopterygota</taxon>
        <taxon>Diptera</taxon>
        <taxon>Brachycera</taxon>
        <taxon>Muscomorpha</taxon>
        <taxon>Ephydroidea</taxon>
        <taxon>Drosophilidae</taxon>
        <taxon>Drosophila</taxon>
        <taxon>Sophophora</taxon>
    </lineage>
</organism>
<evidence type="ECO:0000250" key="1"/>
<evidence type="ECO:0000255" key="2"/>
<evidence type="ECO:0000269" key="3">
    <source>
    </source>
</evidence>
<evidence type="ECO:0000303" key="4">
    <source>
    </source>
</evidence>
<evidence type="ECO:0000305" key="5"/>